<sequence length="261" mass="29915">MTLGKNKRISKGGKRGKKKTQETMSRKEWYDVVAPKNFEVRQFGKTICNKTQGTKIAADYLRGRVYESNLADLNKTQGDDDAYRKVKFVVQEVQGRNLLTQFHSMEMTSDRVYFLLRKWCTTIEAAVETKTADGYTLRLFVIAFTKKQSNQLSKNCYAKTRLVKWVRHRITNLIRQRLSKVNINEAVTLLTRNILRDRLAKRCNPIVPLRDLRIRKVKVVRTPRFDAQALLNAHGEIPASAEGEARVVEEAQEAPAAEATA</sequence>
<name>RS3A1_TRYCC</name>
<protein>
    <recommendedName>
        <fullName evidence="1">Small ribosomal subunit protein eS1A</fullName>
    </recommendedName>
    <alternativeName>
        <fullName evidence="3">40S ribosomal protein S3a-1</fullName>
    </alternativeName>
</protein>
<gene>
    <name type="ORF">Tc00.1047053503635.59</name>
</gene>
<gene>
    <name type="ORF">Tc00.1047053503635.68</name>
</gene>
<feature type="initiator methionine" description="Removed" evidence="1">
    <location>
        <position position="1"/>
    </location>
</feature>
<feature type="chain" id="PRO_0000389348" description="Small ribosomal subunit protein eS1A">
    <location>
        <begin position="2"/>
        <end position="261"/>
    </location>
</feature>
<feature type="region of interest" description="Disordered" evidence="2">
    <location>
        <begin position="1"/>
        <end position="23"/>
    </location>
</feature>
<feature type="compositionally biased region" description="Basic residues" evidence="2">
    <location>
        <begin position="1"/>
        <end position="18"/>
    </location>
</feature>
<dbReference type="EMBL" id="AAHK01001141">
    <property type="protein sequence ID" value="EAN86824.1"/>
    <property type="molecule type" value="Genomic_DNA"/>
</dbReference>
<dbReference type="EMBL" id="AAHK01001141">
    <property type="protein sequence ID" value="EAN86825.1"/>
    <property type="molecule type" value="Genomic_DNA"/>
</dbReference>
<dbReference type="RefSeq" id="XP_808675.1">
    <property type="nucleotide sequence ID" value="XM_803582.1"/>
</dbReference>
<dbReference type="RefSeq" id="XP_808676.1">
    <property type="nucleotide sequence ID" value="XM_803583.1"/>
</dbReference>
<dbReference type="SMR" id="Q4D2R9"/>
<dbReference type="FunCoup" id="Q4D2R9">
    <property type="interactions" value="626"/>
</dbReference>
<dbReference type="STRING" id="353153.Q4D2R9"/>
<dbReference type="PaxDb" id="353153-Q4D2R9"/>
<dbReference type="EnsemblProtists" id="EAN86824">
    <property type="protein sequence ID" value="EAN86824"/>
    <property type="gene ID" value="Tc00.1047053503635.59"/>
</dbReference>
<dbReference type="EnsemblProtists" id="EAN86825">
    <property type="protein sequence ID" value="EAN86825"/>
    <property type="gene ID" value="Tc00.1047053503635.68"/>
</dbReference>
<dbReference type="GeneID" id="3539143"/>
<dbReference type="GeneID" id="3539144"/>
<dbReference type="KEGG" id="tcr:503635.59"/>
<dbReference type="KEGG" id="tcr:503635.68"/>
<dbReference type="eggNOG" id="KOG1628">
    <property type="taxonomic scope" value="Eukaryota"/>
</dbReference>
<dbReference type="InParanoid" id="Q4D2R9"/>
<dbReference type="OMA" id="MHNDESD"/>
<dbReference type="Proteomes" id="UP000002296">
    <property type="component" value="Unassembled WGS sequence"/>
</dbReference>
<dbReference type="GO" id="GO:0022627">
    <property type="term" value="C:cytosolic small ribosomal subunit"/>
    <property type="evidence" value="ECO:0007669"/>
    <property type="project" value="UniProtKB-UniRule"/>
</dbReference>
<dbReference type="GO" id="GO:0003735">
    <property type="term" value="F:structural constituent of ribosome"/>
    <property type="evidence" value="ECO:0007669"/>
    <property type="project" value="UniProtKB-UniRule"/>
</dbReference>
<dbReference type="GO" id="GO:0006412">
    <property type="term" value="P:translation"/>
    <property type="evidence" value="ECO:0007669"/>
    <property type="project" value="UniProtKB-UniRule"/>
</dbReference>
<dbReference type="HAMAP" id="MF_03122">
    <property type="entry name" value="Ribosomal_eS1_euk"/>
    <property type="match status" value="1"/>
</dbReference>
<dbReference type="InterPro" id="IPR001593">
    <property type="entry name" value="Ribosomal_eS1"/>
</dbReference>
<dbReference type="InterPro" id="IPR027500">
    <property type="entry name" value="Ribosomal_eS1_euk"/>
</dbReference>
<dbReference type="PANTHER" id="PTHR11830">
    <property type="entry name" value="40S RIBOSOMAL PROTEIN S3A"/>
    <property type="match status" value="1"/>
</dbReference>
<dbReference type="Pfam" id="PF01015">
    <property type="entry name" value="Ribosomal_S3Ae"/>
    <property type="match status" value="1"/>
</dbReference>
<dbReference type="SMART" id="SM01397">
    <property type="entry name" value="Ribosomal_S3Ae"/>
    <property type="match status" value="1"/>
</dbReference>
<comment type="subunit">
    <text evidence="1">Component of the small ribosomal subunit. Mature ribosomes consist of a small (40S) and a large (60S) subunit. The 40S subunit contains about 33 different proteins and 1 molecule of RNA (18S). The 60S subunit contains about 49 different proteins and 3 molecules of RNA (25S, 5.8S and 5S).</text>
</comment>
<comment type="subcellular location">
    <subcellularLocation>
        <location evidence="1">Cytoplasm</location>
    </subcellularLocation>
</comment>
<comment type="similarity">
    <text evidence="1">Belongs to the eukaryotic ribosomal protein eS1 family.</text>
</comment>
<keyword id="KW-0963">Cytoplasm</keyword>
<keyword id="KW-1185">Reference proteome</keyword>
<keyword id="KW-0687">Ribonucleoprotein</keyword>
<keyword id="KW-0689">Ribosomal protein</keyword>
<accession>Q4D2R9</accession>
<organism>
    <name type="scientific">Trypanosoma cruzi (strain CL Brener)</name>
    <dbReference type="NCBI Taxonomy" id="353153"/>
    <lineage>
        <taxon>Eukaryota</taxon>
        <taxon>Discoba</taxon>
        <taxon>Euglenozoa</taxon>
        <taxon>Kinetoplastea</taxon>
        <taxon>Metakinetoplastina</taxon>
        <taxon>Trypanosomatida</taxon>
        <taxon>Trypanosomatidae</taxon>
        <taxon>Trypanosoma</taxon>
        <taxon>Schizotrypanum</taxon>
    </lineage>
</organism>
<proteinExistence type="inferred from homology"/>
<evidence type="ECO:0000255" key="1">
    <source>
        <dbReference type="HAMAP-Rule" id="MF_03122"/>
    </source>
</evidence>
<evidence type="ECO:0000256" key="2">
    <source>
        <dbReference type="SAM" id="MobiDB-lite"/>
    </source>
</evidence>
<evidence type="ECO:0000305" key="3"/>
<reference key="1">
    <citation type="journal article" date="2005" name="Science">
        <title>The genome sequence of Trypanosoma cruzi, etiologic agent of Chagas disease.</title>
        <authorList>
            <person name="El-Sayed N.M.A."/>
            <person name="Myler P.J."/>
            <person name="Bartholomeu D.C."/>
            <person name="Nilsson D."/>
            <person name="Aggarwal G."/>
            <person name="Tran A.-N."/>
            <person name="Ghedin E."/>
            <person name="Worthey E.A."/>
            <person name="Delcher A.L."/>
            <person name="Blandin G."/>
            <person name="Westenberger S.J."/>
            <person name="Caler E."/>
            <person name="Cerqueira G.C."/>
            <person name="Branche C."/>
            <person name="Haas B."/>
            <person name="Anupama A."/>
            <person name="Arner E."/>
            <person name="Aslund L."/>
            <person name="Attipoe P."/>
            <person name="Bontempi E."/>
            <person name="Bringaud F."/>
            <person name="Burton P."/>
            <person name="Cadag E."/>
            <person name="Campbell D.A."/>
            <person name="Carrington M."/>
            <person name="Crabtree J."/>
            <person name="Darban H."/>
            <person name="da Silveira J.F."/>
            <person name="de Jong P."/>
            <person name="Edwards K."/>
            <person name="Englund P.T."/>
            <person name="Fazelina G."/>
            <person name="Feldblyum T."/>
            <person name="Ferella M."/>
            <person name="Frasch A.C."/>
            <person name="Gull K."/>
            <person name="Horn D."/>
            <person name="Hou L."/>
            <person name="Huang Y."/>
            <person name="Kindlund E."/>
            <person name="Klingbeil M."/>
            <person name="Kluge S."/>
            <person name="Koo H."/>
            <person name="Lacerda D."/>
            <person name="Levin M.J."/>
            <person name="Lorenzi H."/>
            <person name="Louie T."/>
            <person name="Machado C.R."/>
            <person name="McCulloch R."/>
            <person name="McKenna A."/>
            <person name="Mizuno Y."/>
            <person name="Mottram J.C."/>
            <person name="Nelson S."/>
            <person name="Ochaya S."/>
            <person name="Osoegawa K."/>
            <person name="Pai G."/>
            <person name="Parsons M."/>
            <person name="Pentony M."/>
            <person name="Pettersson U."/>
            <person name="Pop M."/>
            <person name="Ramirez J.L."/>
            <person name="Rinta J."/>
            <person name="Robertson L."/>
            <person name="Salzberg S.L."/>
            <person name="Sanchez D.O."/>
            <person name="Seyler A."/>
            <person name="Sharma R."/>
            <person name="Shetty J."/>
            <person name="Simpson A.J."/>
            <person name="Sisk E."/>
            <person name="Tammi M.T."/>
            <person name="Tarleton R."/>
            <person name="Teixeira S."/>
            <person name="Van Aken S."/>
            <person name="Vogt C."/>
            <person name="Ward P.N."/>
            <person name="Wickstead B."/>
            <person name="Wortman J."/>
            <person name="White O."/>
            <person name="Fraser C.M."/>
            <person name="Stuart K.D."/>
            <person name="Andersson B."/>
        </authorList>
    </citation>
    <scope>NUCLEOTIDE SEQUENCE [LARGE SCALE GENOMIC DNA]</scope>
    <source>
        <strain>CL Brener</strain>
    </source>
</reference>